<feature type="chain" id="PRO_0000152341" description="Imidazole glycerol phosphate synthase subunit HisH">
    <location>
        <begin position="1"/>
        <end position="214"/>
    </location>
</feature>
<feature type="domain" description="Glutamine amidotransferase type-1">
    <location>
        <begin position="1"/>
        <end position="212"/>
    </location>
</feature>
<feature type="active site" description="Nucleophile" evidence="1">
    <location>
        <position position="79"/>
    </location>
</feature>
<feature type="active site" evidence="1">
    <location>
        <position position="187"/>
    </location>
</feature>
<feature type="active site" evidence="1">
    <location>
        <position position="189"/>
    </location>
</feature>
<sequence length="214" mass="23603">MLGIIDYGMGNLHSVSKALERLSWSYIVSEQPEELQKADGLILPGVGSFHDAMSILNETGLTAFIKDWVDEGKPLLGICLGMQLLFEESEENKRTKGLSLLPGRVIRFPGVATDGSTYKVPHMGWNQLTFRKPNHPLLTDVEEGHVYFVHSYVVKTDADDVLLATSHYYETVPAVVGRGNILGTQFHPEKSSNVGMSILRNYGAMVEKGVKARG</sequence>
<keyword id="KW-0028">Amino-acid biosynthesis</keyword>
<keyword id="KW-0963">Cytoplasm</keyword>
<keyword id="KW-0315">Glutamine amidotransferase</keyword>
<keyword id="KW-0368">Histidine biosynthesis</keyword>
<keyword id="KW-0378">Hydrolase</keyword>
<keyword id="KW-0456">Lyase</keyword>
<keyword id="KW-1185">Reference proteome</keyword>
<evidence type="ECO:0000250" key="1"/>
<gene>
    <name type="primary">hisH</name>
    <name type="ordered locus">BH3580</name>
</gene>
<proteinExistence type="inferred from homology"/>
<organism>
    <name type="scientific">Halalkalibacterium halodurans (strain ATCC BAA-125 / DSM 18197 / FERM 7344 / JCM 9153 / C-125)</name>
    <name type="common">Bacillus halodurans</name>
    <dbReference type="NCBI Taxonomy" id="272558"/>
    <lineage>
        <taxon>Bacteria</taxon>
        <taxon>Bacillati</taxon>
        <taxon>Bacillota</taxon>
        <taxon>Bacilli</taxon>
        <taxon>Bacillales</taxon>
        <taxon>Bacillaceae</taxon>
        <taxon>Halalkalibacterium (ex Joshi et al. 2022)</taxon>
    </lineage>
</organism>
<dbReference type="EC" id="4.3.2.10"/>
<dbReference type="EC" id="3.5.1.2"/>
<dbReference type="EMBL" id="BA000004">
    <property type="protein sequence ID" value="BAB07299.1"/>
    <property type="molecule type" value="Genomic_DNA"/>
</dbReference>
<dbReference type="PIR" id="D84097">
    <property type="entry name" value="D84097"/>
</dbReference>
<dbReference type="RefSeq" id="WP_010899708.1">
    <property type="nucleotide sequence ID" value="NC_002570.2"/>
</dbReference>
<dbReference type="SMR" id="Q9K6Z4"/>
<dbReference type="STRING" id="272558.gene:10729493"/>
<dbReference type="GeneID" id="87599109"/>
<dbReference type="KEGG" id="bha:BH3580"/>
<dbReference type="eggNOG" id="COG0118">
    <property type="taxonomic scope" value="Bacteria"/>
</dbReference>
<dbReference type="HOGENOM" id="CLU_071837_2_2_9"/>
<dbReference type="OrthoDB" id="9807137at2"/>
<dbReference type="UniPathway" id="UPA00031">
    <property type="reaction ID" value="UER00010"/>
</dbReference>
<dbReference type="Proteomes" id="UP000001258">
    <property type="component" value="Chromosome"/>
</dbReference>
<dbReference type="GO" id="GO:0005737">
    <property type="term" value="C:cytoplasm"/>
    <property type="evidence" value="ECO:0007669"/>
    <property type="project" value="UniProtKB-SubCell"/>
</dbReference>
<dbReference type="GO" id="GO:0004359">
    <property type="term" value="F:glutaminase activity"/>
    <property type="evidence" value="ECO:0007669"/>
    <property type="project" value="UniProtKB-EC"/>
</dbReference>
<dbReference type="GO" id="GO:0000107">
    <property type="term" value="F:imidazoleglycerol-phosphate synthase activity"/>
    <property type="evidence" value="ECO:0007669"/>
    <property type="project" value="UniProtKB-UniRule"/>
</dbReference>
<dbReference type="GO" id="GO:0016829">
    <property type="term" value="F:lyase activity"/>
    <property type="evidence" value="ECO:0007669"/>
    <property type="project" value="UniProtKB-KW"/>
</dbReference>
<dbReference type="GO" id="GO:0000105">
    <property type="term" value="P:L-histidine biosynthetic process"/>
    <property type="evidence" value="ECO:0007669"/>
    <property type="project" value="UniProtKB-UniRule"/>
</dbReference>
<dbReference type="CDD" id="cd01748">
    <property type="entry name" value="GATase1_IGP_Synthase"/>
    <property type="match status" value="1"/>
</dbReference>
<dbReference type="Gene3D" id="3.40.50.880">
    <property type="match status" value="1"/>
</dbReference>
<dbReference type="HAMAP" id="MF_00278">
    <property type="entry name" value="HisH"/>
    <property type="match status" value="1"/>
</dbReference>
<dbReference type="InterPro" id="IPR029062">
    <property type="entry name" value="Class_I_gatase-like"/>
</dbReference>
<dbReference type="InterPro" id="IPR017926">
    <property type="entry name" value="GATASE"/>
</dbReference>
<dbReference type="InterPro" id="IPR010139">
    <property type="entry name" value="Imidazole-glycPsynth_HisH"/>
</dbReference>
<dbReference type="NCBIfam" id="TIGR01855">
    <property type="entry name" value="IMP_synth_hisH"/>
    <property type="match status" value="1"/>
</dbReference>
<dbReference type="PANTHER" id="PTHR42701">
    <property type="entry name" value="IMIDAZOLE GLYCEROL PHOSPHATE SYNTHASE SUBUNIT HISH"/>
    <property type="match status" value="1"/>
</dbReference>
<dbReference type="PANTHER" id="PTHR42701:SF1">
    <property type="entry name" value="IMIDAZOLE GLYCEROL PHOSPHATE SYNTHASE SUBUNIT HISH"/>
    <property type="match status" value="1"/>
</dbReference>
<dbReference type="Pfam" id="PF00117">
    <property type="entry name" value="GATase"/>
    <property type="match status" value="1"/>
</dbReference>
<dbReference type="PIRSF" id="PIRSF000495">
    <property type="entry name" value="Amidotransf_hisH"/>
    <property type="match status" value="1"/>
</dbReference>
<dbReference type="SUPFAM" id="SSF52317">
    <property type="entry name" value="Class I glutamine amidotransferase-like"/>
    <property type="match status" value="1"/>
</dbReference>
<dbReference type="PROSITE" id="PS51273">
    <property type="entry name" value="GATASE_TYPE_1"/>
    <property type="match status" value="1"/>
</dbReference>
<comment type="function">
    <text evidence="1">IGPS catalyzes the conversion of PRFAR and glutamine to IGP, AICAR and glutamate. The HisH subunit catalyzes the hydrolysis of glutamine to glutamate and ammonia as part of the synthesis of IGP and AICAR. The resulting ammonia molecule is channeled to the active site of HisF (By similarity).</text>
</comment>
<comment type="catalytic activity">
    <reaction>
        <text>5-[(5-phospho-1-deoxy-D-ribulos-1-ylimino)methylamino]-1-(5-phospho-beta-D-ribosyl)imidazole-4-carboxamide + L-glutamine = D-erythro-1-(imidazol-4-yl)glycerol 3-phosphate + 5-amino-1-(5-phospho-beta-D-ribosyl)imidazole-4-carboxamide + L-glutamate + H(+)</text>
        <dbReference type="Rhea" id="RHEA:24793"/>
        <dbReference type="ChEBI" id="CHEBI:15378"/>
        <dbReference type="ChEBI" id="CHEBI:29985"/>
        <dbReference type="ChEBI" id="CHEBI:58278"/>
        <dbReference type="ChEBI" id="CHEBI:58359"/>
        <dbReference type="ChEBI" id="CHEBI:58475"/>
        <dbReference type="ChEBI" id="CHEBI:58525"/>
        <dbReference type="EC" id="4.3.2.10"/>
    </reaction>
</comment>
<comment type="catalytic activity">
    <reaction>
        <text>L-glutamine + H2O = L-glutamate + NH4(+)</text>
        <dbReference type="Rhea" id="RHEA:15889"/>
        <dbReference type="ChEBI" id="CHEBI:15377"/>
        <dbReference type="ChEBI" id="CHEBI:28938"/>
        <dbReference type="ChEBI" id="CHEBI:29985"/>
        <dbReference type="ChEBI" id="CHEBI:58359"/>
        <dbReference type="EC" id="3.5.1.2"/>
    </reaction>
</comment>
<comment type="pathway">
    <text>Amino-acid biosynthesis; L-histidine biosynthesis; L-histidine from 5-phospho-alpha-D-ribose 1-diphosphate: step 5/9.</text>
</comment>
<comment type="subunit">
    <text evidence="1">Heterodimer of HisH and HisF.</text>
</comment>
<comment type="subcellular location">
    <subcellularLocation>
        <location evidence="1">Cytoplasm</location>
    </subcellularLocation>
</comment>
<reference key="1">
    <citation type="journal article" date="2000" name="Nucleic Acids Res.">
        <title>Complete genome sequence of the alkaliphilic bacterium Bacillus halodurans and genomic sequence comparison with Bacillus subtilis.</title>
        <authorList>
            <person name="Takami H."/>
            <person name="Nakasone K."/>
            <person name="Takaki Y."/>
            <person name="Maeno G."/>
            <person name="Sasaki R."/>
            <person name="Masui N."/>
            <person name="Fuji F."/>
            <person name="Hirama C."/>
            <person name="Nakamura Y."/>
            <person name="Ogasawara N."/>
            <person name="Kuhara S."/>
            <person name="Horikoshi K."/>
        </authorList>
    </citation>
    <scope>NUCLEOTIDE SEQUENCE [LARGE SCALE GENOMIC DNA]</scope>
    <source>
        <strain>ATCC BAA-125 / DSM 18197 / FERM 7344 / JCM 9153 / C-125</strain>
    </source>
</reference>
<accession>Q9K6Z4</accession>
<protein>
    <recommendedName>
        <fullName>Imidazole glycerol phosphate synthase subunit HisH</fullName>
        <ecNumber>4.3.2.10</ecNumber>
    </recommendedName>
    <alternativeName>
        <fullName>IGP synthase glutaminase subunit</fullName>
        <ecNumber>3.5.1.2</ecNumber>
    </alternativeName>
    <alternativeName>
        <fullName>IGP synthase subunit HisH</fullName>
    </alternativeName>
    <alternativeName>
        <fullName>ImGP synthase subunit HisH</fullName>
        <shortName>IGPS subunit HisH</shortName>
    </alternativeName>
</protein>
<name>HIS5_HALH5</name>